<evidence type="ECO:0000250" key="1"/>
<evidence type="ECO:0000305" key="2"/>
<organism>
    <name type="scientific">Methanocaldococcus jannaschii (strain ATCC 43067 / DSM 2661 / JAL-1 / JCM 10045 / NBRC 100440)</name>
    <name type="common">Methanococcus jannaschii</name>
    <dbReference type="NCBI Taxonomy" id="243232"/>
    <lineage>
        <taxon>Archaea</taxon>
        <taxon>Methanobacteriati</taxon>
        <taxon>Methanobacteriota</taxon>
        <taxon>Methanomada group</taxon>
        <taxon>Methanococci</taxon>
        <taxon>Methanococcales</taxon>
        <taxon>Methanocaldococcaceae</taxon>
        <taxon>Methanocaldococcus</taxon>
    </lineage>
</organism>
<gene>
    <name type="primary">pfdA1</name>
    <name type="synonym">pfdA</name>
    <name type="ordered locus">MJ0952</name>
</gene>
<protein>
    <recommendedName>
        <fullName>Prefoldin subunit alpha 1</fullName>
    </recommendedName>
    <alternativeName>
        <fullName>GimC subunit alpha 1</fullName>
    </alternativeName>
</protein>
<accession>Q58362</accession>
<comment type="function">
    <text evidence="1">Molecular chaperone capable of stabilizing a range of proteins. Seems to fulfill an ATP-independent, HSP70-like function in archaeal de novo protein folding (By similarity).</text>
</comment>
<comment type="subunit">
    <text evidence="1">Heterohexamer of two alpha and four beta subunits.</text>
</comment>
<comment type="subcellular location">
    <subcellularLocation>
        <location evidence="1">Cytoplasm</location>
    </subcellularLocation>
</comment>
<comment type="similarity">
    <text evidence="2">Belongs to the prefoldin subunit alpha family.</text>
</comment>
<name>PFDA1_METJA</name>
<reference key="1">
    <citation type="journal article" date="1996" name="Science">
        <title>Complete genome sequence of the methanogenic archaeon, Methanococcus jannaschii.</title>
        <authorList>
            <person name="Bult C.J."/>
            <person name="White O."/>
            <person name="Olsen G.J."/>
            <person name="Zhou L."/>
            <person name="Fleischmann R.D."/>
            <person name="Sutton G.G."/>
            <person name="Blake J.A."/>
            <person name="FitzGerald L.M."/>
            <person name="Clayton R.A."/>
            <person name="Gocayne J.D."/>
            <person name="Kerlavage A.R."/>
            <person name="Dougherty B.A."/>
            <person name="Tomb J.-F."/>
            <person name="Adams M.D."/>
            <person name="Reich C.I."/>
            <person name="Overbeek R."/>
            <person name="Kirkness E.F."/>
            <person name="Weinstock K.G."/>
            <person name="Merrick J.M."/>
            <person name="Glodek A."/>
            <person name="Scott J.L."/>
            <person name="Geoghagen N.S.M."/>
            <person name="Weidman J.F."/>
            <person name="Fuhrmann J.L."/>
            <person name="Nguyen D."/>
            <person name="Utterback T.R."/>
            <person name="Kelley J.M."/>
            <person name="Peterson J.D."/>
            <person name="Sadow P.W."/>
            <person name="Hanna M.C."/>
            <person name="Cotton M.D."/>
            <person name="Roberts K.M."/>
            <person name="Hurst M.A."/>
            <person name="Kaine B.P."/>
            <person name="Borodovsky M."/>
            <person name="Klenk H.-P."/>
            <person name="Fraser C.M."/>
            <person name="Smith H.O."/>
            <person name="Woese C.R."/>
            <person name="Venter J.C."/>
        </authorList>
    </citation>
    <scope>NUCLEOTIDE SEQUENCE [LARGE SCALE GENOMIC DNA]</scope>
    <source>
        <strain>ATCC 43067 / DSM 2661 / JAL-1 / JCM 10045 / NBRC 100440</strain>
    </source>
</reference>
<proteinExistence type="inferred from homology"/>
<sequence>MENMAEDLRQKAMALEIYNQQLQMIQSEITSIRALKSEIMNSIKTIENIKADEETLIPVGPGVFLKAKIVDDKALIGVKSDIYVEKSFNEVIEDLKKSVEDLDKAEKEGMKKAEELAKAITALRKELQTEIQKAQQAQDKKQ</sequence>
<feature type="chain" id="PRO_0000153674" description="Prefoldin subunit alpha 1">
    <location>
        <begin position="1"/>
        <end position="142"/>
    </location>
</feature>
<keyword id="KW-0143">Chaperone</keyword>
<keyword id="KW-0963">Cytoplasm</keyword>
<keyword id="KW-1185">Reference proteome</keyword>
<dbReference type="EMBL" id="L77117">
    <property type="protein sequence ID" value="AAB98957.1"/>
    <property type="molecule type" value="Genomic_DNA"/>
</dbReference>
<dbReference type="PIR" id="H64418">
    <property type="entry name" value="H64418"/>
</dbReference>
<dbReference type="SMR" id="Q58362"/>
<dbReference type="FunCoup" id="Q58362">
    <property type="interactions" value="3"/>
</dbReference>
<dbReference type="STRING" id="243232.MJ_0952"/>
<dbReference type="PaxDb" id="243232-MJ_0952"/>
<dbReference type="EnsemblBacteria" id="AAB98957">
    <property type="protein sequence ID" value="AAB98957"/>
    <property type="gene ID" value="MJ_0952"/>
</dbReference>
<dbReference type="KEGG" id="mja:MJ_0952"/>
<dbReference type="eggNOG" id="arCOG01341">
    <property type="taxonomic scope" value="Archaea"/>
</dbReference>
<dbReference type="HOGENOM" id="CLU_091867_1_2_2"/>
<dbReference type="InParanoid" id="Q58362"/>
<dbReference type="PhylomeDB" id="Q58362"/>
<dbReference type="Proteomes" id="UP000000805">
    <property type="component" value="Chromosome"/>
</dbReference>
<dbReference type="GO" id="GO:0005737">
    <property type="term" value="C:cytoplasm"/>
    <property type="evidence" value="ECO:0000318"/>
    <property type="project" value="GO_Central"/>
</dbReference>
<dbReference type="GO" id="GO:0016272">
    <property type="term" value="C:prefoldin complex"/>
    <property type="evidence" value="ECO:0000318"/>
    <property type="project" value="GO_Central"/>
</dbReference>
<dbReference type="GO" id="GO:0051082">
    <property type="term" value="F:unfolded protein binding"/>
    <property type="evidence" value="ECO:0007669"/>
    <property type="project" value="UniProtKB-UniRule"/>
</dbReference>
<dbReference type="GO" id="GO:0006457">
    <property type="term" value="P:protein folding"/>
    <property type="evidence" value="ECO:0007669"/>
    <property type="project" value="UniProtKB-UniRule"/>
</dbReference>
<dbReference type="CDD" id="cd23160">
    <property type="entry name" value="Prefoldin_alpha_GimC"/>
    <property type="match status" value="1"/>
</dbReference>
<dbReference type="Gene3D" id="1.10.287.370">
    <property type="match status" value="1"/>
</dbReference>
<dbReference type="HAMAP" id="MF_00308">
    <property type="entry name" value="PfdA"/>
    <property type="match status" value="1"/>
</dbReference>
<dbReference type="InterPro" id="IPR011599">
    <property type="entry name" value="PFD_alpha_archaea"/>
</dbReference>
<dbReference type="InterPro" id="IPR009053">
    <property type="entry name" value="Prefoldin"/>
</dbReference>
<dbReference type="InterPro" id="IPR004127">
    <property type="entry name" value="Prefoldin_subunit_alpha"/>
</dbReference>
<dbReference type="NCBIfam" id="TIGR00293">
    <property type="entry name" value="prefoldin subunit alpha"/>
    <property type="match status" value="1"/>
</dbReference>
<dbReference type="Pfam" id="PF02996">
    <property type="entry name" value="Prefoldin"/>
    <property type="match status" value="1"/>
</dbReference>
<dbReference type="SUPFAM" id="SSF46579">
    <property type="entry name" value="Prefoldin"/>
    <property type="match status" value="1"/>
</dbReference>